<gene>
    <name type="ordered locus">M446_6322</name>
</gene>
<proteinExistence type="inferred from homology"/>
<protein>
    <recommendedName>
        <fullName evidence="1">Putative membrane protein insertion efficiency factor</fullName>
    </recommendedName>
</protein>
<dbReference type="EMBL" id="CP000943">
    <property type="protein sequence ID" value="ACA20587.1"/>
    <property type="molecule type" value="Genomic_DNA"/>
</dbReference>
<dbReference type="STRING" id="426117.M446_6322"/>
<dbReference type="KEGG" id="met:M446_6322"/>
<dbReference type="eggNOG" id="COG0759">
    <property type="taxonomic scope" value="Bacteria"/>
</dbReference>
<dbReference type="HOGENOM" id="CLU_144811_0_0_5"/>
<dbReference type="GO" id="GO:0005886">
    <property type="term" value="C:plasma membrane"/>
    <property type="evidence" value="ECO:0007669"/>
    <property type="project" value="UniProtKB-SubCell"/>
</dbReference>
<dbReference type="HAMAP" id="MF_00386">
    <property type="entry name" value="UPF0161_YidD"/>
    <property type="match status" value="1"/>
</dbReference>
<dbReference type="InterPro" id="IPR002696">
    <property type="entry name" value="Membr_insert_effic_factor_YidD"/>
</dbReference>
<dbReference type="NCBIfam" id="TIGR00278">
    <property type="entry name" value="membrane protein insertion efficiency factor YidD"/>
    <property type="match status" value="1"/>
</dbReference>
<dbReference type="PANTHER" id="PTHR33383">
    <property type="entry name" value="MEMBRANE PROTEIN INSERTION EFFICIENCY FACTOR-RELATED"/>
    <property type="match status" value="1"/>
</dbReference>
<dbReference type="PANTHER" id="PTHR33383:SF1">
    <property type="entry name" value="MEMBRANE PROTEIN INSERTION EFFICIENCY FACTOR-RELATED"/>
    <property type="match status" value="1"/>
</dbReference>
<dbReference type="Pfam" id="PF01809">
    <property type="entry name" value="YidD"/>
    <property type="match status" value="1"/>
</dbReference>
<dbReference type="SMART" id="SM01234">
    <property type="entry name" value="Haemolytic"/>
    <property type="match status" value="1"/>
</dbReference>
<name>YIDD_METS4</name>
<organism>
    <name type="scientific">Methylobacterium sp. (strain 4-46)</name>
    <dbReference type="NCBI Taxonomy" id="426117"/>
    <lineage>
        <taxon>Bacteria</taxon>
        <taxon>Pseudomonadati</taxon>
        <taxon>Pseudomonadota</taxon>
        <taxon>Alphaproteobacteria</taxon>
        <taxon>Hyphomicrobiales</taxon>
        <taxon>Methylobacteriaceae</taxon>
        <taxon>Methylobacterium</taxon>
    </lineage>
</organism>
<sequence length="101" mass="11077">MSLPRRAAHAAIRAYQLTLSGLVGRQCRHWPSCSAYADEAIQRHGLWAGGWMGLARICRCGPFGTHGIDLVCEALPEGAAWHRPWAYGRWRGVNAPAPLGE</sequence>
<comment type="function">
    <text evidence="1">Could be involved in insertion of integral membrane proteins into the membrane.</text>
</comment>
<comment type="subcellular location">
    <subcellularLocation>
        <location evidence="1">Cell inner membrane</location>
        <topology evidence="1">Peripheral membrane protein</topology>
        <orientation evidence="1">Cytoplasmic side</orientation>
    </subcellularLocation>
</comment>
<comment type="similarity">
    <text evidence="1">Belongs to the UPF0161 family.</text>
</comment>
<reference key="1">
    <citation type="submission" date="2008-02" db="EMBL/GenBank/DDBJ databases">
        <title>Complete sequence of chromosome of Methylobacterium sp. 4-46.</title>
        <authorList>
            <consortium name="US DOE Joint Genome Institute"/>
            <person name="Copeland A."/>
            <person name="Lucas S."/>
            <person name="Lapidus A."/>
            <person name="Glavina del Rio T."/>
            <person name="Dalin E."/>
            <person name="Tice H."/>
            <person name="Bruce D."/>
            <person name="Goodwin L."/>
            <person name="Pitluck S."/>
            <person name="Chertkov O."/>
            <person name="Brettin T."/>
            <person name="Detter J.C."/>
            <person name="Han C."/>
            <person name="Kuske C.R."/>
            <person name="Schmutz J."/>
            <person name="Larimer F."/>
            <person name="Land M."/>
            <person name="Hauser L."/>
            <person name="Kyrpides N."/>
            <person name="Ivanova N."/>
            <person name="Marx C.J."/>
            <person name="Richardson P."/>
        </authorList>
    </citation>
    <scope>NUCLEOTIDE SEQUENCE [LARGE SCALE GENOMIC DNA]</scope>
    <source>
        <strain>4-46</strain>
    </source>
</reference>
<accession>B0U883</accession>
<feature type="chain" id="PRO_1000197763" description="Putative membrane protein insertion efficiency factor">
    <location>
        <begin position="1"/>
        <end position="101"/>
    </location>
</feature>
<evidence type="ECO:0000255" key="1">
    <source>
        <dbReference type="HAMAP-Rule" id="MF_00386"/>
    </source>
</evidence>
<keyword id="KW-0997">Cell inner membrane</keyword>
<keyword id="KW-1003">Cell membrane</keyword>
<keyword id="KW-0472">Membrane</keyword>